<keyword id="KW-0028">Amino-acid biosynthesis</keyword>
<keyword id="KW-0100">Branched-chain amino acid biosynthesis</keyword>
<keyword id="KW-0460">Magnesium</keyword>
<keyword id="KW-0479">Metal-binding</keyword>
<keyword id="KW-0521">NADP</keyword>
<keyword id="KW-0560">Oxidoreductase</keyword>
<gene>
    <name evidence="1" type="primary">ilvC</name>
    <name type="ordered locus">NMCC_1477</name>
</gene>
<evidence type="ECO:0000255" key="1">
    <source>
        <dbReference type="HAMAP-Rule" id="MF_00435"/>
    </source>
</evidence>
<evidence type="ECO:0000255" key="2">
    <source>
        <dbReference type="PROSITE-ProRule" id="PRU01197"/>
    </source>
</evidence>
<evidence type="ECO:0000255" key="3">
    <source>
        <dbReference type="PROSITE-ProRule" id="PRU01198"/>
    </source>
</evidence>
<reference key="1">
    <citation type="journal article" date="2008" name="Genomics">
        <title>Characterization of ST-4821 complex, a unique Neisseria meningitidis clone.</title>
        <authorList>
            <person name="Peng J."/>
            <person name="Yang L."/>
            <person name="Yang F."/>
            <person name="Yang J."/>
            <person name="Yan Y."/>
            <person name="Nie H."/>
            <person name="Zhang X."/>
            <person name="Xiong Z."/>
            <person name="Jiang Y."/>
            <person name="Cheng F."/>
            <person name="Xu X."/>
            <person name="Chen S."/>
            <person name="Sun L."/>
            <person name="Li W."/>
            <person name="Shen Y."/>
            <person name="Shao Z."/>
            <person name="Liang X."/>
            <person name="Xu J."/>
            <person name="Jin Q."/>
        </authorList>
    </citation>
    <scope>NUCLEOTIDE SEQUENCE [LARGE SCALE GENOMIC DNA]</scope>
    <source>
        <strain>053442</strain>
    </source>
</reference>
<organism>
    <name type="scientific">Neisseria meningitidis serogroup C (strain 053442)</name>
    <dbReference type="NCBI Taxonomy" id="374833"/>
    <lineage>
        <taxon>Bacteria</taxon>
        <taxon>Pseudomonadati</taxon>
        <taxon>Pseudomonadota</taxon>
        <taxon>Betaproteobacteria</taxon>
        <taxon>Neisseriales</taxon>
        <taxon>Neisseriaceae</taxon>
        <taxon>Neisseria</taxon>
    </lineage>
</organism>
<sequence length="337" mass="36438">MQVYYDKDADLSLIKGKTVAIIGYGSQGHAHAANLKDSGVNVVIGLRQGSSWKKAEAAGHVVKTVAEATKEADVVMLLLPDETMPAVYHAEVTANLKEGATLAFAHGFNVHYNQIVPRADLDVIMVAPKGPGHTVRSEYKRGGGVPSLIAVYQDNSGKAKDIALSYAAANGGTKGGVIETTFREETETDLFGEQAVLCGGVVELIKAGFETLTEAGYAPEMAYFECLHEMKLIVDLIFEGGIANMNYSISNNAEYGEYVTGPEVVNASSKEAMRNALKRIQTGEYAKMFIQEGNVNYASMTARRRLNADHQVEKVGAQLRAMMPWITANKLVDQDKN</sequence>
<dbReference type="EC" id="1.1.1.86" evidence="1"/>
<dbReference type="EMBL" id="CP000381">
    <property type="protein sequence ID" value="ABX73642.1"/>
    <property type="molecule type" value="Genomic_DNA"/>
</dbReference>
<dbReference type="RefSeq" id="WP_002218988.1">
    <property type="nucleotide sequence ID" value="NC_010120.1"/>
</dbReference>
<dbReference type="SMR" id="A9M177"/>
<dbReference type="KEGG" id="nmn:NMCC_1477"/>
<dbReference type="HOGENOM" id="CLU_033821_0_1_4"/>
<dbReference type="UniPathway" id="UPA00047">
    <property type="reaction ID" value="UER00056"/>
</dbReference>
<dbReference type="UniPathway" id="UPA00049">
    <property type="reaction ID" value="UER00060"/>
</dbReference>
<dbReference type="Proteomes" id="UP000001177">
    <property type="component" value="Chromosome"/>
</dbReference>
<dbReference type="GO" id="GO:0005829">
    <property type="term" value="C:cytosol"/>
    <property type="evidence" value="ECO:0007669"/>
    <property type="project" value="TreeGrafter"/>
</dbReference>
<dbReference type="GO" id="GO:0004455">
    <property type="term" value="F:ketol-acid reductoisomerase activity"/>
    <property type="evidence" value="ECO:0007669"/>
    <property type="project" value="UniProtKB-UniRule"/>
</dbReference>
<dbReference type="GO" id="GO:0000287">
    <property type="term" value="F:magnesium ion binding"/>
    <property type="evidence" value="ECO:0007669"/>
    <property type="project" value="UniProtKB-UniRule"/>
</dbReference>
<dbReference type="GO" id="GO:0050661">
    <property type="term" value="F:NADP binding"/>
    <property type="evidence" value="ECO:0007669"/>
    <property type="project" value="InterPro"/>
</dbReference>
<dbReference type="GO" id="GO:0009097">
    <property type="term" value="P:isoleucine biosynthetic process"/>
    <property type="evidence" value="ECO:0007669"/>
    <property type="project" value="UniProtKB-UniRule"/>
</dbReference>
<dbReference type="GO" id="GO:0009099">
    <property type="term" value="P:L-valine biosynthetic process"/>
    <property type="evidence" value="ECO:0007669"/>
    <property type="project" value="UniProtKB-UniRule"/>
</dbReference>
<dbReference type="FunFam" id="3.40.50.720:FF:000023">
    <property type="entry name" value="Ketol-acid reductoisomerase (NADP(+))"/>
    <property type="match status" value="1"/>
</dbReference>
<dbReference type="Gene3D" id="6.10.240.10">
    <property type="match status" value="1"/>
</dbReference>
<dbReference type="Gene3D" id="3.40.50.720">
    <property type="entry name" value="NAD(P)-binding Rossmann-like Domain"/>
    <property type="match status" value="1"/>
</dbReference>
<dbReference type="HAMAP" id="MF_00435">
    <property type="entry name" value="IlvC"/>
    <property type="match status" value="1"/>
</dbReference>
<dbReference type="InterPro" id="IPR008927">
    <property type="entry name" value="6-PGluconate_DH-like_C_sf"/>
</dbReference>
<dbReference type="InterPro" id="IPR013023">
    <property type="entry name" value="KARI"/>
</dbReference>
<dbReference type="InterPro" id="IPR000506">
    <property type="entry name" value="KARI_C"/>
</dbReference>
<dbReference type="InterPro" id="IPR013116">
    <property type="entry name" value="KARI_N"/>
</dbReference>
<dbReference type="InterPro" id="IPR014359">
    <property type="entry name" value="KARI_prok"/>
</dbReference>
<dbReference type="InterPro" id="IPR036291">
    <property type="entry name" value="NAD(P)-bd_dom_sf"/>
</dbReference>
<dbReference type="NCBIfam" id="TIGR00465">
    <property type="entry name" value="ilvC"/>
    <property type="match status" value="1"/>
</dbReference>
<dbReference type="NCBIfam" id="NF004017">
    <property type="entry name" value="PRK05479.1"/>
    <property type="match status" value="1"/>
</dbReference>
<dbReference type="NCBIfam" id="NF009940">
    <property type="entry name" value="PRK13403.1"/>
    <property type="match status" value="1"/>
</dbReference>
<dbReference type="PANTHER" id="PTHR21371">
    <property type="entry name" value="KETOL-ACID REDUCTOISOMERASE, MITOCHONDRIAL"/>
    <property type="match status" value="1"/>
</dbReference>
<dbReference type="PANTHER" id="PTHR21371:SF1">
    <property type="entry name" value="KETOL-ACID REDUCTOISOMERASE, MITOCHONDRIAL"/>
    <property type="match status" value="1"/>
</dbReference>
<dbReference type="Pfam" id="PF01450">
    <property type="entry name" value="KARI_C"/>
    <property type="match status" value="1"/>
</dbReference>
<dbReference type="Pfam" id="PF07991">
    <property type="entry name" value="KARI_N"/>
    <property type="match status" value="1"/>
</dbReference>
<dbReference type="PIRSF" id="PIRSF000116">
    <property type="entry name" value="IlvC_gammaproteo"/>
    <property type="match status" value="1"/>
</dbReference>
<dbReference type="SUPFAM" id="SSF48179">
    <property type="entry name" value="6-phosphogluconate dehydrogenase C-terminal domain-like"/>
    <property type="match status" value="1"/>
</dbReference>
<dbReference type="SUPFAM" id="SSF51735">
    <property type="entry name" value="NAD(P)-binding Rossmann-fold domains"/>
    <property type="match status" value="1"/>
</dbReference>
<dbReference type="PROSITE" id="PS51851">
    <property type="entry name" value="KARI_C"/>
    <property type="match status" value="1"/>
</dbReference>
<dbReference type="PROSITE" id="PS51850">
    <property type="entry name" value="KARI_N"/>
    <property type="match status" value="1"/>
</dbReference>
<protein>
    <recommendedName>
        <fullName evidence="1">Ketol-acid reductoisomerase (NADP(+))</fullName>
        <shortName evidence="1">KARI</shortName>
        <ecNumber evidence="1">1.1.1.86</ecNumber>
    </recommendedName>
    <alternativeName>
        <fullName evidence="1">Acetohydroxy-acid isomeroreductase</fullName>
        <shortName evidence="1">AHIR</shortName>
    </alternativeName>
    <alternativeName>
        <fullName evidence="1">Alpha-keto-beta-hydroxylacyl reductoisomerase</fullName>
    </alternativeName>
    <alternativeName>
        <fullName evidence="1">Ketol-acid reductoisomerase type 1</fullName>
    </alternativeName>
    <alternativeName>
        <fullName evidence="1">Ketol-acid reductoisomerase type I</fullName>
    </alternativeName>
</protein>
<feature type="chain" id="PRO_1000080635" description="Ketol-acid reductoisomerase (NADP(+))">
    <location>
        <begin position="1"/>
        <end position="337"/>
    </location>
</feature>
<feature type="domain" description="KARI N-terminal Rossmann" evidence="2">
    <location>
        <begin position="1"/>
        <end position="180"/>
    </location>
</feature>
<feature type="domain" description="KARI C-terminal knotted" evidence="3">
    <location>
        <begin position="181"/>
        <end position="326"/>
    </location>
</feature>
<feature type="active site" evidence="1">
    <location>
        <position position="106"/>
    </location>
</feature>
<feature type="binding site" evidence="1">
    <location>
        <begin position="24"/>
        <end position="27"/>
    </location>
    <ligand>
        <name>NADP(+)</name>
        <dbReference type="ChEBI" id="CHEBI:58349"/>
    </ligand>
</feature>
<feature type="binding site" evidence="1">
    <location>
        <position position="47"/>
    </location>
    <ligand>
        <name>NADP(+)</name>
        <dbReference type="ChEBI" id="CHEBI:58349"/>
    </ligand>
</feature>
<feature type="binding site" evidence="1">
    <location>
        <position position="51"/>
    </location>
    <ligand>
        <name>NADP(+)</name>
        <dbReference type="ChEBI" id="CHEBI:58349"/>
    </ligand>
</feature>
<feature type="binding site" evidence="1">
    <location>
        <position position="132"/>
    </location>
    <ligand>
        <name>NADP(+)</name>
        <dbReference type="ChEBI" id="CHEBI:58349"/>
    </ligand>
</feature>
<feature type="binding site" evidence="1">
    <location>
        <position position="189"/>
    </location>
    <ligand>
        <name>Mg(2+)</name>
        <dbReference type="ChEBI" id="CHEBI:18420"/>
        <label>1</label>
    </ligand>
</feature>
<feature type="binding site" evidence="1">
    <location>
        <position position="189"/>
    </location>
    <ligand>
        <name>Mg(2+)</name>
        <dbReference type="ChEBI" id="CHEBI:18420"/>
        <label>2</label>
    </ligand>
</feature>
<feature type="binding site" evidence="1">
    <location>
        <position position="193"/>
    </location>
    <ligand>
        <name>Mg(2+)</name>
        <dbReference type="ChEBI" id="CHEBI:18420"/>
        <label>1</label>
    </ligand>
</feature>
<feature type="binding site" evidence="1">
    <location>
        <position position="225"/>
    </location>
    <ligand>
        <name>Mg(2+)</name>
        <dbReference type="ChEBI" id="CHEBI:18420"/>
        <label>2</label>
    </ligand>
</feature>
<feature type="binding site" evidence="1">
    <location>
        <position position="229"/>
    </location>
    <ligand>
        <name>Mg(2+)</name>
        <dbReference type="ChEBI" id="CHEBI:18420"/>
        <label>2</label>
    </ligand>
</feature>
<feature type="binding site" evidence="1">
    <location>
        <position position="250"/>
    </location>
    <ligand>
        <name>substrate</name>
    </ligand>
</feature>
<name>ILVC_NEIM0</name>
<proteinExistence type="inferred from homology"/>
<comment type="function">
    <text evidence="1">Involved in the biosynthesis of branched-chain amino acids (BCAA). Catalyzes an alkyl-migration followed by a ketol-acid reduction of (S)-2-acetolactate (S2AL) to yield (R)-2,3-dihydroxy-isovalerate. In the isomerase reaction, S2AL is rearranged via a Mg-dependent methyl migration to produce 3-hydroxy-3-methyl-2-ketobutyrate (HMKB). In the reductase reaction, this 2-ketoacid undergoes a metal-dependent reduction by NADPH to yield (R)-2,3-dihydroxy-isovalerate.</text>
</comment>
<comment type="catalytic activity">
    <reaction evidence="1">
        <text>(2R)-2,3-dihydroxy-3-methylbutanoate + NADP(+) = (2S)-2-acetolactate + NADPH + H(+)</text>
        <dbReference type="Rhea" id="RHEA:22068"/>
        <dbReference type="ChEBI" id="CHEBI:15378"/>
        <dbReference type="ChEBI" id="CHEBI:49072"/>
        <dbReference type="ChEBI" id="CHEBI:57783"/>
        <dbReference type="ChEBI" id="CHEBI:58349"/>
        <dbReference type="ChEBI" id="CHEBI:58476"/>
        <dbReference type="EC" id="1.1.1.86"/>
    </reaction>
</comment>
<comment type="catalytic activity">
    <reaction evidence="1">
        <text>(2R,3R)-2,3-dihydroxy-3-methylpentanoate + NADP(+) = (S)-2-ethyl-2-hydroxy-3-oxobutanoate + NADPH + H(+)</text>
        <dbReference type="Rhea" id="RHEA:13493"/>
        <dbReference type="ChEBI" id="CHEBI:15378"/>
        <dbReference type="ChEBI" id="CHEBI:49256"/>
        <dbReference type="ChEBI" id="CHEBI:49258"/>
        <dbReference type="ChEBI" id="CHEBI:57783"/>
        <dbReference type="ChEBI" id="CHEBI:58349"/>
        <dbReference type="EC" id="1.1.1.86"/>
    </reaction>
</comment>
<comment type="cofactor">
    <cofactor evidence="1">
        <name>Mg(2+)</name>
        <dbReference type="ChEBI" id="CHEBI:18420"/>
    </cofactor>
    <text evidence="1">Binds 2 magnesium ions per subunit.</text>
</comment>
<comment type="pathway">
    <text evidence="1">Amino-acid biosynthesis; L-isoleucine biosynthesis; L-isoleucine from 2-oxobutanoate: step 2/4.</text>
</comment>
<comment type="pathway">
    <text evidence="1">Amino-acid biosynthesis; L-valine biosynthesis; L-valine from pyruvate: step 2/4.</text>
</comment>
<comment type="similarity">
    <text evidence="1">Belongs to the ketol-acid reductoisomerase family.</text>
</comment>
<accession>A9M177</accession>